<sequence>MSQSESKKNRRGGREDILEKWITTRRKAEELEKDLRKARKTIKKLEDENPWLGNIIGIIRKGKDGEGAPPAKRPRTDQMEIDSGTGKRPHKSGFTDKEREDHRRRKALENKKKQLSSGGKNLSREEEEELGRLTVEDEERRRRVAGPRTGDVNLSGGGPRGAPGGGFVPRMEGVPESPFTRTGEGLDIRGNQGFP</sequence>
<accession>Q9E925</accession>
<accession>Q9E924</accession>
<feature type="chain" id="PRO_0000038149" description="Small delta antigen">
    <location>
        <begin position="1"/>
        <end position="195"/>
    </location>
</feature>
<feature type="domain" description="HDAg" evidence="4">
    <location>
        <begin position="21"/>
        <end position="195"/>
    </location>
</feature>
<feature type="region of interest" description="Dimerization" evidence="3">
    <location>
        <begin position="13"/>
        <end position="60"/>
    </location>
</feature>
<feature type="region of interest" description="Disordered" evidence="5">
    <location>
        <begin position="59"/>
        <end position="195"/>
    </location>
</feature>
<feature type="region of interest" description="RNA-binding" evidence="4">
    <location>
        <begin position="97"/>
        <end position="107"/>
    </location>
</feature>
<feature type="region of interest" description="RNAPII-binding" evidence="4">
    <location>
        <begin position="130"/>
        <end position="195"/>
    </location>
</feature>
<feature type="region of interest" description="RNA-binding" evidence="4">
    <location>
        <begin position="136"/>
        <end position="146"/>
    </location>
</feature>
<feature type="short sequence motif" description="Nuclear localization signal" evidence="2">
    <location>
        <begin position="66"/>
        <end position="75"/>
    </location>
</feature>
<feature type="compositionally biased region" description="Basic and acidic residues" evidence="5">
    <location>
        <begin position="93"/>
        <end position="112"/>
    </location>
</feature>
<feature type="compositionally biased region" description="Basic and acidic residues" evidence="5">
    <location>
        <begin position="130"/>
        <end position="141"/>
    </location>
</feature>
<feature type="compositionally biased region" description="Gly residues" evidence="5">
    <location>
        <begin position="155"/>
        <end position="167"/>
    </location>
</feature>
<feature type="modified residue" description="Phosphoserine; by host CK2" evidence="2">
    <location>
        <position position="2"/>
    </location>
</feature>
<feature type="modified residue" description="Omega-N-methylated arginine; by host PRMT1" evidence="2">
    <location>
        <position position="14"/>
    </location>
</feature>
<feature type="modified residue" description="N6-acetyllysine; by host" evidence="2">
    <location>
        <position position="72"/>
    </location>
</feature>
<feature type="modified residue" description="Phosphoserine; by host" evidence="2">
    <location>
        <position position="123"/>
    </location>
</feature>
<feature type="modified residue" description="Phosphoserine; by host MAPK1 and MAPK3" evidence="2">
    <location>
        <position position="177"/>
    </location>
</feature>
<feature type="modified residue" description="Phosphothreonine; by host" evidence="2">
    <location>
        <position position="182"/>
    </location>
</feature>
<name>SHDAG_HDVTW</name>
<evidence type="ECO:0000250" key="1"/>
<evidence type="ECO:0000250" key="2">
    <source>
        <dbReference type="UniProtKB" id="P0C6L3"/>
    </source>
</evidence>
<evidence type="ECO:0000255" key="3"/>
<evidence type="ECO:0000255" key="4">
    <source>
        <dbReference type="PROSITE-ProRule" id="PRU01183"/>
    </source>
</evidence>
<evidence type="ECO:0000256" key="5">
    <source>
        <dbReference type="SAM" id="MobiDB-lite"/>
    </source>
</evidence>
<evidence type="ECO:0000269" key="6">
    <source>
    </source>
</evidence>
<evidence type="ECO:0000305" key="7"/>
<comment type="function">
    <text evidence="1">Promotes both transcription and replication of genomic RNA. Following virus entry into host cell, provides nuclear import of HDV RNPs thanks to its nuclear localization signal. May interact with host RNA polymerase II thereby changing its template requirement from DNA to RNA. RNA pol II complex would then acts as an RNA-directed RNA polymerase, and transcribe and replicate HDV genome (By similarity).</text>
</comment>
<comment type="subunit">
    <text evidence="1">Homodimer. Homooctamer. Interacts with host RNA polymerase II complex, and with host NPM1.</text>
</comment>
<comment type="subcellular location">
    <subcellularLocation>
        <location>Virion</location>
    </subcellularLocation>
    <subcellularLocation>
        <location evidence="1">Host nucleus</location>
    </subcellularLocation>
</comment>
<comment type="PTM">
    <text evidence="1">Phosphorylated at serines and threonines by host MAPK1/3, PKR, and CK2.</text>
</comment>
<comment type="PTM">
    <text evidence="1">Acetylation modulates nuclear localization. Neo-synthesized genomic RNA migrates from the nucleus to the cytoplasm, where they interact with S-HDAg, which once acetylated redirect both partners to the nucleus (By similarity).</text>
</comment>
<comment type="PTM">
    <text evidence="1">Methylation plays a role in viral genome replication.</text>
</comment>
<comment type="RNA editing">
    <location>
        <position position="196" evidence="6"/>
    </location>
    <text evidence="1">Partially edited. RNA editing at this position occurs on the antigenomic strand and consists of a conversion of A to G catalyzed by the cellular enzyme ADAR1. The unedited RNA version gives rise to the small delta antigen, which ends with a nonsense codon at position 196. In the edited version, this amber codon is modified to a tryptophan codon and gives rise to the large delta antigen protein (AC P0C6M4). S-HDAg suppresses editing of non-replicating antigenomic RNA, thereby regulating the extent of editing (By similarity).</text>
</comment>
<comment type="miscellaneous">
    <text>This strains belongs to the genotype II found only in East Asia.</text>
</comment>
<comment type="similarity">
    <text evidence="7">Belongs to the hepatitis delta antigen family.</text>
</comment>
<protein>
    <recommendedName>
        <fullName>Small delta antigen</fullName>
        <shortName>S-HDAg</shortName>
    </recommendedName>
    <alternativeName>
        <fullName>p24</fullName>
    </alternativeName>
</protein>
<proteinExistence type="inferred from homology"/>
<dbReference type="EMBL" id="AF104264">
    <property type="protein sequence ID" value="AAG26089.1"/>
    <property type="molecule type" value="Genomic_RNA"/>
</dbReference>
<dbReference type="SMR" id="Q9E925"/>
<dbReference type="Proteomes" id="UP000008113">
    <property type="component" value="Segment"/>
</dbReference>
<dbReference type="GO" id="GO:0043657">
    <property type="term" value="C:host cell"/>
    <property type="evidence" value="ECO:0007669"/>
    <property type="project" value="GOC"/>
</dbReference>
<dbReference type="GO" id="GO:0042025">
    <property type="term" value="C:host cell nucleus"/>
    <property type="evidence" value="ECO:0007669"/>
    <property type="project" value="UniProtKB-SubCell"/>
</dbReference>
<dbReference type="GO" id="GO:0044423">
    <property type="term" value="C:virion component"/>
    <property type="evidence" value="ECO:0007669"/>
    <property type="project" value="UniProtKB-KW"/>
</dbReference>
<dbReference type="GO" id="GO:0003723">
    <property type="term" value="F:RNA binding"/>
    <property type="evidence" value="ECO:0007669"/>
    <property type="project" value="UniProtKB-KW"/>
</dbReference>
<dbReference type="GO" id="GO:0046718">
    <property type="term" value="P:symbiont entry into host cell"/>
    <property type="evidence" value="ECO:0007669"/>
    <property type="project" value="UniProtKB-KW"/>
</dbReference>
<dbReference type="GO" id="GO:0075732">
    <property type="term" value="P:viral penetration into host nucleus"/>
    <property type="evidence" value="ECO:0007669"/>
    <property type="project" value="UniProtKB-KW"/>
</dbReference>
<dbReference type="Gene3D" id="4.10.220.40">
    <property type="entry name" value="Delta antigen, N-terminal"/>
    <property type="match status" value="1"/>
</dbReference>
<dbReference type="InterPro" id="IPR027403">
    <property type="entry name" value="Delta_antigen_N"/>
</dbReference>
<dbReference type="InterPro" id="IPR037517">
    <property type="entry name" value="HDAG_dom"/>
</dbReference>
<dbReference type="InterPro" id="IPR002506">
    <property type="entry name" value="HDV_ag"/>
</dbReference>
<dbReference type="Pfam" id="PF01517">
    <property type="entry name" value="HDV_ag"/>
    <property type="match status" value="1"/>
</dbReference>
<dbReference type="SUPFAM" id="SSF58108">
    <property type="entry name" value="Oligomerization domain of hepatitis delta antigen"/>
    <property type="match status" value="1"/>
</dbReference>
<dbReference type="PROSITE" id="PS51838">
    <property type="entry name" value="HDAG"/>
    <property type="match status" value="1"/>
</dbReference>
<organismHost>
    <name type="scientific">Homo sapiens</name>
    <name type="common">Human</name>
    <dbReference type="NCBI Taxonomy" id="9606"/>
</organismHost>
<reference key="1">
    <citation type="journal article" date="1999" name="Mol. Biol. Evol.">
        <title>Recombination of hepatitis D virus RNA sequences and its implications.</title>
        <authorList>
            <person name="Wu J.-C."/>
            <person name="Chiang T.-Y."/>
            <person name="Shiue W.-K."/>
            <person name="Wang S.-Y."/>
            <person name="Sheen I.-J."/>
            <person name="Huang Y.-H."/>
            <person name="Syu W.-J."/>
        </authorList>
    </citation>
    <scope>NUCLEOTIDE SEQUENCE [GENOMIC RNA]</scope>
    <scope>RNA EDITING</scope>
</reference>
<reference key="2">
    <citation type="journal article" date="2005" name="Acta Virol.">
        <title>Hepatitis D.</title>
        <authorList>
            <person name="Husa P."/>
            <person name="Linhartova A."/>
            <person name="Nemecek V."/>
            <person name="Husova L."/>
        </authorList>
    </citation>
    <scope>REVIEW</scope>
</reference>
<reference key="3">
    <citation type="journal article" date="2006" name="Curr. Top. Microbiol. Immunol.">
        <title>Post-translational modification of delta antigen of hepatitis D virus.</title>
        <authorList>
            <person name="Huang W.H."/>
            <person name="Chen C.W."/>
            <person name="Wu H.L."/>
            <person name="Chen P.J."/>
        </authorList>
    </citation>
    <scope>REVIEW</scope>
</reference>
<keyword id="KW-0007">Acetylation</keyword>
<keyword id="KW-1048">Host nucleus</keyword>
<keyword id="KW-0945">Host-virus interaction</keyword>
<keyword id="KW-0488">Methylation</keyword>
<keyword id="KW-0597">Phosphoprotein</keyword>
<keyword id="KW-0691">RNA editing</keyword>
<keyword id="KW-0694">RNA-binding</keyword>
<keyword id="KW-1163">Viral penetration into host nucleus</keyword>
<keyword id="KW-0946">Virion</keyword>
<keyword id="KW-1160">Virus entry into host cell</keyword>
<organism>
    <name type="scientific">Hepatitis delta virus genotype II (isolate TW2476)</name>
    <name type="common">HDV</name>
    <dbReference type="NCBI Taxonomy" id="261992"/>
    <lineage>
        <taxon>Viruses</taxon>
        <taxon>Ribozyviria</taxon>
        <taxon>Kolmioviridae</taxon>
        <taxon>Deltavirus</taxon>
        <taxon>Hepatitis delta virus</taxon>
    </lineage>
</organism>